<comment type="function">
    <text evidence="1">Tetrapolymerization of the monopyrrole PBG into the hydroxymethylbilane pre-uroporphyrinogen in several discrete steps.</text>
</comment>
<comment type="catalytic activity">
    <reaction evidence="1">
        <text>4 porphobilinogen + H2O = hydroxymethylbilane + 4 NH4(+)</text>
        <dbReference type="Rhea" id="RHEA:13185"/>
        <dbReference type="ChEBI" id="CHEBI:15377"/>
        <dbReference type="ChEBI" id="CHEBI:28938"/>
        <dbReference type="ChEBI" id="CHEBI:57845"/>
        <dbReference type="ChEBI" id="CHEBI:58126"/>
        <dbReference type="EC" id="2.5.1.61"/>
    </reaction>
</comment>
<comment type="cofactor">
    <cofactor evidence="1">
        <name>dipyrromethane</name>
        <dbReference type="ChEBI" id="CHEBI:60342"/>
    </cofactor>
    <text evidence="1">Binds 1 dipyrromethane group covalently.</text>
</comment>
<comment type="pathway">
    <text evidence="1">Porphyrin-containing compound metabolism; protoporphyrin-IX biosynthesis; coproporphyrinogen-III from 5-aminolevulinate: step 2/4.</text>
</comment>
<comment type="subunit">
    <text evidence="1">Monomer.</text>
</comment>
<comment type="miscellaneous">
    <text evidence="1">The porphobilinogen subunits are added to the dipyrromethane group.</text>
</comment>
<comment type="similarity">
    <text evidence="1">Belongs to the HMBS family.</text>
</comment>
<protein>
    <recommendedName>
        <fullName evidence="1">Porphobilinogen deaminase</fullName>
        <shortName evidence="1">PBG</shortName>
        <ecNumber evidence="1">2.5.1.61</ecNumber>
    </recommendedName>
    <alternativeName>
        <fullName evidence="1">Hydroxymethylbilane synthase</fullName>
        <shortName evidence="1">HMBS</shortName>
    </alternativeName>
    <alternativeName>
        <fullName evidence="1">Pre-uroporphyrinogen synthase</fullName>
    </alternativeName>
</protein>
<accession>B9IZ39</accession>
<organism>
    <name type="scientific">Bacillus cereus (strain Q1)</name>
    <dbReference type="NCBI Taxonomy" id="361100"/>
    <lineage>
        <taxon>Bacteria</taxon>
        <taxon>Bacillati</taxon>
        <taxon>Bacillota</taxon>
        <taxon>Bacilli</taxon>
        <taxon>Bacillales</taxon>
        <taxon>Bacillaceae</taxon>
        <taxon>Bacillus</taxon>
        <taxon>Bacillus cereus group</taxon>
    </lineage>
</organism>
<gene>
    <name evidence="1" type="primary">hemC</name>
    <name type="ordered locus">BCQ_4251</name>
</gene>
<name>HEM3_BACCQ</name>
<reference key="1">
    <citation type="journal article" date="2009" name="J. Bacteriol.">
        <title>Complete genome sequence of the extremophilic Bacillus cereus strain Q1 with industrial applications.</title>
        <authorList>
            <person name="Xiong Z."/>
            <person name="Jiang Y."/>
            <person name="Qi D."/>
            <person name="Lu H."/>
            <person name="Yang F."/>
            <person name="Yang J."/>
            <person name="Chen L."/>
            <person name="Sun L."/>
            <person name="Xu X."/>
            <person name="Xue Y."/>
            <person name="Zhu Y."/>
            <person name="Jin Q."/>
        </authorList>
    </citation>
    <scope>NUCLEOTIDE SEQUENCE [LARGE SCALE GENOMIC DNA]</scope>
    <source>
        <strain>Q1</strain>
    </source>
</reference>
<keyword id="KW-0627">Porphyrin biosynthesis</keyword>
<keyword id="KW-0808">Transferase</keyword>
<sequence length="309" mass="33763">MRKIIVGSRKSKLALTQTNWFIDQLKALGLPYEFEVKEIVTKGDVILDVTLSKVGGKGLFVKEIEHALLTKEIDMAVHSMKDMPAVLPEGLMIGCTPKRVDPRDAFISKNGASFKELAEGAILGTSSLRRSAQLLAARPDLQVKWIRGNIDTRLRKLKEEDYDAIILATAGLQRMGWDNEVITEHLDETLCVPAVGQGALAIECREDDKDLLQLLAHMNDGVTEKTVAAERVFLHKLEGGCQVPIAGYATLTENDAIELTALVGSMDGSVLLKEKVVGTDPEKVGLEAADRLINQGAKELILAANKEQQ</sequence>
<proteinExistence type="inferred from homology"/>
<dbReference type="EC" id="2.5.1.61" evidence="1"/>
<dbReference type="EMBL" id="CP000227">
    <property type="protein sequence ID" value="ACM14678.1"/>
    <property type="molecule type" value="Genomic_DNA"/>
</dbReference>
<dbReference type="SMR" id="B9IZ39"/>
<dbReference type="KEGG" id="bcq:BCQ_4251"/>
<dbReference type="HOGENOM" id="CLU_019704_0_2_9"/>
<dbReference type="UniPathway" id="UPA00251">
    <property type="reaction ID" value="UER00319"/>
</dbReference>
<dbReference type="Proteomes" id="UP000000441">
    <property type="component" value="Chromosome"/>
</dbReference>
<dbReference type="GO" id="GO:0005737">
    <property type="term" value="C:cytoplasm"/>
    <property type="evidence" value="ECO:0007669"/>
    <property type="project" value="TreeGrafter"/>
</dbReference>
<dbReference type="GO" id="GO:0004418">
    <property type="term" value="F:hydroxymethylbilane synthase activity"/>
    <property type="evidence" value="ECO:0007669"/>
    <property type="project" value="UniProtKB-UniRule"/>
</dbReference>
<dbReference type="GO" id="GO:0006782">
    <property type="term" value="P:protoporphyrinogen IX biosynthetic process"/>
    <property type="evidence" value="ECO:0007669"/>
    <property type="project" value="UniProtKB-UniRule"/>
</dbReference>
<dbReference type="CDD" id="cd13646">
    <property type="entry name" value="PBP2_EcHMBS_like"/>
    <property type="match status" value="1"/>
</dbReference>
<dbReference type="FunFam" id="3.30.160.40:FF:000001">
    <property type="entry name" value="Porphobilinogen deaminase"/>
    <property type="match status" value="1"/>
</dbReference>
<dbReference type="FunFam" id="3.40.190.10:FF:000004">
    <property type="entry name" value="Porphobilinogen deaminase"/>
    <property type="match status" value="1"/>
</dbReference>
<dbReference type="FunFam" id="3.40.190.10:FF:000005">
    <property type="entry name" value="Porphobilinogen deaminase"/>
    <property type="match status" value="1"/>
</dbReference>
<dbReference type="Gene3D" id="3.40.190.10">
    <property type="entry name" value="Periplasmic binding protein-like II"/>
    <property type="match status" value="2"/>
</dbReference>
<dbReference type="Gene3D" id="3.30.160.40">
    <property type="entry name" value="Porphobilinogen deaminase, C-terminal domain"/>
    <property type="match status" value="1"/>
</dbReference>
<dbReference type="HAMAP" id="MF_00260">
    <property type="entry name" value="Porphobil_deam"/>
    <property type="match status" value="1"/>
</dbReference>
<dbReference type="InterPro" id="IPR000860">
    <property type="entry name" value="HemC"/>
</dbReference>
<dbReference type="InterPro" id="IPR022419">
    <property type="entry name" value="Porphobilin_deaminase_cofac_BS"/>
</dbReference>
<dbReference type="InterPro" id="IPR022417">
    <property type="entry name" value="Porphobilin_deaminase_N"/>
</dbReference>
<dbReference type="InterPro" id="IPR022418">
    <property type="entry name" value="Porphobilinogen_deaminase_C"/>
</dbReference>
<dbReference type="InterPro" id="IPR036803">
    <property type="entry name" value="Porphobilinogen_deaminase_C_sf"/>
</dbReference>
<dbReference type="NCBIfam" id="TIGR00212">
    <property type="entry name" value="hemC"/>
    <property type="match status" value="1"/>
</dbReference>
<dbReference type="PANTHER" id="PTHR11557">
    <property type="entry name" value="PORPHOBILINOGEN DEAMINASE"/>
    <property type="match status" value="1"/>
</dbReference>
<dbReference type="PANTHER" id="PTHR11557:SF0">
    <property type="entry name" value="PORPHOBILINOGEN DEAMINASE"/>
    <property type="match status" value="1"/>
</dbReference>
<dbReference type="Pfam" id="PF01379">
    <property type="entry name" value="Porphobil_deam"/>
    <property type="match status" value="1"/>
</dbReference>
<dbReference type="Pfam" id="PF03900">
    <property type="entry name" value="Porphobil_deamC"/>
    <property type="match status" value="1"/>
</dbReference>
<dbReference type="PIRSF" id="PIRSF001438">
    <property type="entry name" value="4pyrrol_synth_OHMeBilane_synth"/>
    <property type="match status" value="1"/>
</dbReference>
<dbReference type="PRINTS" id="PR00151">
    <property type="entry name" value="PORPHBDMNASE"/>
</dbReference>
<dbReference type="SUPFAM" id="SSF53850">
    <property type="entry name" value="Periplasmic binding protein-like II"/>
    <property type="match status" value="1"/>
</dbReference>
<dbReference type="SUPFAM" id="SSF54782">
    <property type="entry name" value="Porphobilinogen deaminase (hydroxymethylbilane synthase), C-terminal domain"/>
    <property type="match status" value="1"/>
</dbReference>
<dbReference type="PROSITE" id="PS00533">
    <property type="entry name" value="PORPHOBILINOGEN_DEAM"/>
    <property type="match status" value="1"/>
</dbReference>
<evidence type="ECO:0000255" key="1">
    <source>
        <dbReference type="HAMAP-Rule" id="MF_00260"/>
    </source>
</evidence>
<feature type="chain" id="PRO_1000125654" description="Porphobilinogen deaminase">
    <location>
        <begin position="1"/>
        <end position="309"/>
    </location>
</feature>
<feature type="modified residue" description="S-(dipyrrolylmethanemethyl)cysteine" evidence="1">
    <location>
        <position position="241"/>
    </location>
</feature>